<reference key="1">
    <citation type="journal article" date="1996" name="Science">
        <title>Complete genome sequence of the methanogenic archaeon, Methanococcus jannaschii.</title>
        <authorList>
            <person name="Bult C.J."/>
            <person name="White O."/>
            <person name="Olsen G.J."/>
            <person name="Zhou L."/>
            <person name="Fleischmann R.D."/>
            <person name="Sutton G.G."/>
            <person name="Blake J.A."/>
            <person name="FitzGerald L.M."/>
            <person name="Clayton R.A."/>
            <person name="Gocayne J.D."/>
            <person name="Kerlavage A.R."/>
            <person name="Dougherty B.A."/>
            <person name="Tomb J.-F."/>
            <person name="Adams M.D."/>
            <person name="Reich C.I."/>
            <person name="Overbeek R."/>
            <person name="Kirkness E.F."/>
            <person name="Weinstock K.G."/>
            <person name="Merrick J.M."/>
            <person name="Glodek A."/>
            <person name="Scott J.L."/>
            <person name="Geoghagen N.S.M."/>
            <person name="Weidman J.F."/>
            <person name="Fuhrmann J.L."/>
            <person name="Nguyen D."/>
            <person name="Utterback T.R."/>
            <person name="Kelley J.M."/>
            <person name="Peterson J.D."/>
            <person name="Sadow P.W."/>
            <person name="Hanna M.C."/>
            <person name="Cotton M.D."/>
            <person name="Roberts K.M."/>
            <person name="Hurst M.A."/>
            <person name="Kaine B.P."/>
            <person name="Borodovsky M."/>
            <person name="Klenk H.-P."/>
            <person name="Fraser C.M."/>
            <person name="Smith H.O."/>
            <person name="Woese C.R."/>
            <person name="Venter J.C."/>
        </authorList>
    </citation>
    <scope>NUCLEOTIDE SEQUENCE [LARGE SCALE GENOMIC DNA]</scope>
    <source>
        <strain>ATCC 43067 / DSM 2661 / JAL-1 / JCM 10045 / NBRC 100440</strain>
    </source>
</reference>
<keyword id="KW-1003">Cell membrane</keyword>
<keyword id="KW-0472">Membrane</keyword>
<keyword id="KW-0592">Phosphate transport</keyword>
<keyword id="KW-1185">Reference proteome</keyword>
<keyword id="KW-0812">Transmembrane</keyword>
<keyword id="KW-1133">Transmembrane helix</keyword>
<keyword id="KW-0813">Transport</keyword>
<name>Y630_METJA</name>
<organism>
    <name type="scientific">Methanocaldococcus jannaschii (strain ATCC 43067 / DSM 2661 / JAL-1 / JCM 10045 / NBRC 100440)</name>
    <name type="common">Methanococcus jannaschii</name>
    <dbReference type="NCBI Taxonomy" id="243232"/>
    <lineage>
        <taxon>Archaea</taxon>
        <taxon>Methanobacteriati</taxon>
        <taxon>Methanobacteriota</taxon>
        <taxon>Methanomada group</taxon>
        <taxon>Methanococci</taxon>
        <taxon>Methanococcales</taxon>
        <taxon>Methanocaldococcaceae</taxon>
        <taxon>Methanocaldococcus</taxon>
    </lineage>
</organism>
<sequence>MITIEISINLELIISFYLLFILGANNVANAIGTAYASRATTYRNLLILFSISVIIGSLFAKNVGSTVNSLSSDALTALIISALVMTLSTYKKVPISLHTVIICSLIGLNFNSSNLYVFGEILLSWILSPIIAVVIAYILYSAYEKIDISILKKITMIRYFLLISAAVVAFNLGSNDLPTVLGTFTTSQIIYIIGAIFLCLGAYLYGNRVSETLSMITNLSVSSAFIAQLSGGLAVTIFTALGMPVSTTQAIVGGILGVGLTKGIKTVRWKVLKNIIFWWVVAPIIALIIGFIINRMI</sequence>
<gene>
    <name type="ordered locus">MJ0630</name>
</gene>
<comment type="function">
    <text>Potential transporter for phosphate.</text>
</comment>
<comment type="subcellular location">
    <subcellularLocation>
        <location evidence="2">Cell membrane</location>
        <topology evidence="2">Multi-pass membrane protein</topology>
    </subcellularLocation>
</comment>
<comment type="similarity">
    <text evidence="2">Belongs to the inorganic phosphate transporter (PiT) (TC 2.A.20) family.</text>
</comment>
<feature type="chain" id="PRO_0000080804" description="Putative phosphate permease MJ0630">
    <location>
        <begin position="1"/>
        <end position="297"/>
    </location>
</feature>
<feature type="transmembrane region" description="Helical" evidence="1">
    <location>
        <begin position="2"/>
        <end position="22"/>
    </location>
</feature>
<feature type="transmembrane region" description="Helical" evidence="1">
    <location>
        <begin position="45"/>
        <end position="65"/>
    </location>
</feature>
<feature type="transmembrane region" description="Helical" evidence="1">
    <location>
        <begin position="67"/>
        <end position="87"/>
    </location>
</feature>
<feature type="transmembrane region" description="Helical" evidence="1">
    <location>
        <begin position="99"/>
        <end position="119"/>
    </location>
</feature>
<feature type="transmembrane region" description="Helical" evidence="1">
    <location>
        <begin position="121"/>
        <end position="141"/>
    </location>
</feature>
<feature type="transmembrane region" description="Helical" evidence="1">
    <location>
        <begin position="154"/>
        <end position="174"/>
    </location>
</feature>
<feature type="transmembrane region" description="Helical" evidence="1">
    <location>
        <begin position="180"/>
        <end position="200"/>
    </location>
</feature>
<feature type="transmembrane region" description="Helical" evidence="1">
    <location>
        <begin position="225"/>
        <end position="245"/>
    </location>
</feature>
<feature type="transmembrane region" description="Helical" evidence="1">
    <location>
        <begin position="274"/>
        <end position="294"/>
    </location>
</feature>
<proteinExistence type="inferred from homology"/>
<evidence type="ECO:0000255" key="1"/>
<evidence type="ECO:0000305" key="2"/>
<dbReference type="EMBL" id="L77117">
    <property type="protein sequence ID" value="AAB98622.1"/>
    <property type="molecule type" value="Genomic_DNA"/>
</dbReference>
<dbReference type="PIR" id="F64378">
    <property type="entry name" value="F64378"/>
</dbReference>
<dbReference type="RefSeq" id="WP_010870135.1">
    <property type="nucleotide sequence ID" value="NC_000909.1"/>
</dbReference>
<dbReference type="SMR" id="Q58047"/>
<dbReference type="FunCoup" id="Q58047">
    <property type="interactions" value="58"/>
</dbReference>
<dbReference type="STRING" id="243232.MJ_0630"/>
<dbReference type="TCDB" id="2.A.20.3.1">
    <property type="family name" value="the inorganic phosphate transporter (pit) family"/>
</dbReference>
<dbReference type="PaxDb" id="243232-MJ_0630"/>
<dbReference type="EnsemblBacteria" id="AAB98622">
    <property type="protein sequence ID" value="AAB98622"/>
    <property type="gene ID" value="MJ_0630"/>
</dbReference>
<dbReference type="GeneID" id="1451496"/>
<dbReference type="KEGG" id="mja:MJ_0630"/>
<dbReference type="eggNOG" id="arCOG02267">
    <property type="taxonomic scope" value="Archaea"/>
</dbReference>
<dbReference type="HOGENOM" id="CLU_015355_0_0_2"/>
<dbReference type="InParanoid" id="Q58047"/>
<dbReference type="OrthoDB" id="101311at2157"/>
<dbReference type="PhylomeDB" id="Q58047"/>
<dbReference type="Proteomes" id="UP000000805">
    <property type="component" value="Chromosome"/>
</dbReference>
<dbReference type="GO" id="GO:0005886">
    <property type="term" value="C:plasma membrane"/>
    <property type="evidence" value="ECO:0007669"/>
    <property type="project" value="UniProtKB-SubCell"/>
</dbReference>
<dbReference type="GO" id="GO:0005315">
    <property type="term" value="F:phosphate transmembrane transporter activity"/>
    <property type="evidence" value="ECO:0000318"/>
    <property type="project" value="GO_Central"/>
</dbReference>
<dbReference type="GO" id="GO:0035435">
    <property type="term" value="P:phosphate ion transmembrane transport"/>
    <property type="evidence" value="ECO:0000318"/>
    <property type="project" value="GO_Central"/>
</dbReference>
<dbReference type="InterPro" id="IPR001204">
    <property type="entry name" value="Phos_transporter"/>
</dbReference>
<dbReference type="PANTHER" id="PTHR11101">
    <property type="entry name" value="PHOSPHATE TRANSPORTER"/>
    <property type="match status" value="1"/>
</dbReference>
<dbReference type="PANTHER" id="PTHR11101:SF80">
    <property type="entry name" value="PHOSPHATE TRANSPORTER"/>
    <property type="match status" value="1"/>
</dbReference>
<dbReference type="Pfam" id="PF01384">
    <property type="entry name" value="PHO4"/>
    <property type="match status" value="1"/>
</dbReference>
<protein>
    <recommendedName>
        <fullName>Putative phosphate permease MJ0630</fullName>
    </recommendedName>
</protein>
<accession>Q58047</accession>